<protein>
    <recommendedName>
        <fullName>Protein OPG146</fullName>
    </recommendedName>
</protein>
<comment type="function">
    <text evidence="1">Plays a role in the maturation of immature virions to infectious particles. May also participate in viral transcription.</text>
</comment>
<comment type="subunit">
    <text evidence="1">Interacts with capping enzyme RAP94/OPG109, the two large RNA polymerase subunits RPO147/OPG105 and RPO132/OPG151, the two early transcription factor subunits OPG185 and OPG133, one of the capping enzyme subunits OPG113, the nucleoside triphosphate phosphohydrolase OPG123, two core proteins OPG129 and OPG138, and a virion protein OPG064.</text>
</comment>
<comment type="subcellular location">
    <subcellularLocation>
        <location evidence="1">Virion</location>
    </subcellularLocation>
    <subcellularLocation>
        <location evidence="1">Host cytoplasm</location>
    </subcellularLocation>
    <subcellularLocation>
        <location evidence="1">Host nucleus</location>
    </subcellularLocation>
</comment>
<comment type="similarity">
    <text evidence="2">Belongs to the orthopoxvirus OPG146 family.</text>
</comment>
<organism>
    <name type="scientific">Variola virus (isolate Human/India/Ind3/1967)</name>
    <name type="common">VARV</name>
    <name type="synonym">Smallpox virus</name>
    <dbReference type="NCBI Taxonomy" id="587200"/>
    <lineage>
        <taxon>Viruses</taxon>
        <taxon>Varidnaviria</taxon>
        <taxon>Bamfordvirae</taxon>
        <taxon>Nucleocytoviricota</taxon>
        <taxon>Pokkesviricetes</taxon>
        <taxon>Chitovirales</taxon>
        <taxon>Poxviridae</taxon>
        <taxon>Chordopoxvirinae</taxon>
        <taxon>Orthopoxvirus</taxon>
        <taxon>Variola virus</taxon>
    </lineage>
</organism>
<accession>P33842</accession>
<reference key="1">
    <citation type="journal article" date="1993" name="FEBS Lett.">
        <title>Genes of variola and vaccinia viruses necessary to overcome the host protective mechanisms.</title>
        <authorList>
            <person name="Shchelkunov S.N."/>
            <person name="Blinov V.M."/>
            <person name="Sandakhchiev L.S."/>
        </authorList>
    </citation>
    <scope>NUCLEOTIDE SEQUENCE [LARGE SCALE GENOMIC DNA]</scope>
</reference>
<reference key="2">
    <citation type="submission" date="1995-12" db="EMBL/GenBank/DDBJ databases">
        <title>XhoI-D DNA fragment of Variola minor virus strain Garcia-1966.</title>
        <authorList>
            <person name="Shchelkunov S.N."/>
            <person name="Totmenin A.V."/>
            <person name="Sosnovtsev S.V."/>
            <person name="Safronov P.F."/>
            <person name="Resenchuk S.M."/>
            <person name="Blinov V.M."/>
            <person name="Sandakhchiev L.S."/>
        </authorList>
    </citation>
    <scope>NUCLEOTIDE SEQUENCE [GENOMIC DNA]</scope>
    <source>
        <strain>Garcia-1966</strain>
    </source>
</reference>
<proteinExistence type="inferred from homology"/>
<name>PG146_VAR67</name>
<sequence length="76" mass="8271">MDSTNARSGMKSRKKKPKTTVIDEDDCMTCSVCQSKLVKISDITKVSLDYINTMRGNTLACTACGSSLKLLNDFAS</sequence>
<feature type="chain" id="PRO_0000099264" description="Protein OPG146">
    <location>
        <begin position="1"/>
        <end position="76"/>
    </location>
</feature>
<gene>
    <name type="primary">OPG146</name>
    <name type="ORF">A19L</name>
</gene>
<evidence type="ECO:0000250" key="1">
    <source>
        <dbReference type="UniProtKB" id="P68714"/>
    </source>
</evidence>
<evidence type="ECO:0000305" key="2"/>
<keyword id="KW-1035">Host cytoplasm</keyword>
<keyword id="KW-1048">Host nucleus</keyword>
<keyword id="KW-0597">Phosphoprotein</keyword>
<keyword id="KW-1185">Reference proteome</keyword>
<keyword id="KW-0946">Virion</keyword>
<organismHost>
    <name type="scientific">Homo sapiens</name>
    <name type="common">Human</name>
    <dbReference type="NCBI Taxonomy" id="9606"/>
</organismHost>
<dbReference type="EMBL" id="X69198">
    <property type="protein sequence ID" value="CAA49064.1"/>
    <property type="molecule type" value="Genomic_DNA"/>
</dbReference>
<dbReference type="EMBL" id="X76268">
    <property type="protein sequence ID" value="CAA53892.1"/>
    <property type="molecule type" value="Genomic_DNA"/>
</dbReference>
<dbReference type="PIR" id="A72166">
    <property type="entry name" value="A72166"/>
</dbReference>
<dbReference type="PIR" id="B36850">
    <property type="entry name" value="B36850"/>
</dbReference>
<dbReference type="RefSeq" id="NP_042167.1">
    <property type="nucleotide sequence ID" value="NC_001611.1"/>
</dbReference>
<dbReference type="GeneID" id="1486494"/>
<dbReference type="KEGG" id="vg:1486494"/>
<dbReference type="Proteomes" id="UP000002060">
    <property type="component" value="Segment"/>
</dbReference>
<dbReference type="GO" id="GO:0030430">
    <property type="term" value="C:host cell cytoplasm"/>
    <property type="evidence" value="ECO:0007669"/>
    <property type="project" value="UniProtKB-SubCell"/>
</dbReference>
<dbReference type="GO" id="GO:0042025">
    <property type="term" value="C:host cell nucleus"/>
    <property type="evidence" value="ECO:0007669"/>
    <property type="project" value="UniProtKB-SubCell"/>
</dbReference>
<dbReference type="GO" id="GO:0044423">
    <property type="term" value="C:virion component"/>
    <property type="evidence" value="ECO:0007669"/>
    <property type="project" value="UniProtKB-KW"/>
</dbReference>
<dbReference type="InterPro" id="IPR007769">
    <property type="entry name" value="Poxvirus_A19"/>
</dbReference>
<dbReference type="Pfam" id="PF05077">
    <property type="entry name" value="DUF678"/>
    <property type="match status" value="1"/>
</dbReference>